<keyword id="KW-0687">Ribonucleoprotein</keyword>
<keyword id="KW-0689">Ribosomal protein</keyword>
<keyword id="KW-0694">RNA-binding</keyword>
<keyword id="KW-0699">rRNA-binding</keyword>
<reference key="1">
    <citation type="journal article" date="2006" name="Proc. Natl. Acad. Sci. U.S.A.">
        <title>The complete genome sequence of a chronic atrophic gastritis Helicobacter pylori strain: evolution during disease progression.</title>
        <authorList>
            <person name="Oh J.D."/>
            <person name="Kling-Baeckhed H."/>
            <person name="Giannakis M."/>
            <person name="Xu J."/>
            <person name="Fulton R.S."/>
            <person name="Fulton L.A."/>
            <person name="Cordum H.S."/>
            <person name="Wang C."/>
            <person name="Elliott G."/>
            <person name="Edwards J."/>
            <person name="Mardis E.R."/>
            <person name="Engstrand L.G."/>
            <person name="Gordon J.I."/>
        </authorList>
    </citation>
    <scope>NUCLEOTIDE SEQUENCE [LARGE SCALE GENOMIC DNA]</scope>
    <source>
        <strain>HPAG1</strain>
    </source>
</reference>
<sequence>MSRSIKKGPFIDDHLMKKTLKAKEGKDNRPIKTWSRRSTILPEMIGFTYNVHNGRVFVPVYITENHVGYKLGEFAPTRTFKGHKGSVQKKIGK</sequence>
<dbReference type="EMBL" id="CP000241">
    <property type="protein sequence ID" value="ABF85327.1"/>
    <property type="molecule type" value="Genomic_DNA"/>
</dbReference>
<dbReference type="RefSeq" id="WP_000091385.1">
    <property type="nucleotide sequence ID" value="NC_008086.1"/>
</dbReference>
<dbReference type="SMR" id="Q1CRU5"/>
<dbReference type="GeneID" id="93237554"/>
<dbReference type="KEGG" id="hpa:HPAG1_1260"/>
<dbReference type="HOGENOM" id="CLU_144911_0_1_7"/>
<dbReference type="GO" id="GO:0005737">
    <property type="term" value="C:cytoplasm"/>
    <property type="evidence" value="ECO:0007669"/>
    <property type="project" value="UniProtKB-ARBA"/>
</dbReference>
<dbReference type="GO" id="GO:0015935">
    <property type="term" value="C:small ribosomal subunit"/>
    <property type="evidence" value="ECO:0007669"/>
    <property type="project" value="InterPro"/>
</dbReference>
<dbReference type="GO" id="GO:0019843">
    <property type="term" value="F:rRNA binding"/>
    <property type="evidence" value="ECO:0007669"/>
    <property type="project" value="UniProtKB-UniRule"/>
</dbReference>
<dbReference type="GO" id="GO:0003735">
    <property type="term" value="F:structural constituent of ribosome"/>
    <property type="evidence" value="ECO:0007669"/>
    <property type="project" value="InterPro"/>
</dbReference>
<dbReference type="GO" id="GO:0000028">
    <property type="term" value="P:ribosomal small subunit assembly"/>
    <property type="evidence" value="ECO:0007669"/>
    <property type="project" value="TreeGrafter"/>
</dbReference>
<dbReference type="GO" id="GO:0006412">
    <property type="term" value="P:translation"/>
    <property type="evidence" value="ECO:0007669"/>
    <property type="project" value="UniProtKB-UniRule"/>
</dbReference>
<dbReference type="FunFam" id="3.30.860.10:FF:000001">
    <property type="entry name" value="30S ribosomal protein S19"/>
    <property type="match status" value="1"/>
</dbReference>
<dbReference type="Gene3D" id="3.30.860.10">
    <property type="entry name" value="30s Ribosomal Protein S19, Chain A"/>
    <property type="match status" value="1"/>
</dbReference>
<dbReference type="HAMAP" id="MF_00531">
    <property type="entry name" value="Ribosomal_uS19"/>
    <property type="match status" value="1"/>
</dbReference>
<dbReference type="InterPro" id="IPR002222">
    <property type="entry name" value="Ribosomal_uS19"/>
</dbReference>
<dbReference type="InterPro" id="IPR005732">
    <property type="entry name" value="Ribosomal_uS19_bac-type"/>
</dbReference>
<dbReference type="InterPro" id="IPR020934">
    <property type="entry name" value="Ribosomal_uS19_CS"/>
</dbReference>
<dbReference type="InterPro" id="IPR023575">
    <property type="entry name" value="Ribosomal_uS19_SF"/>
</dbReference>
<dbReference type="NCBIfam" id="TIGR01050">
    <property type="entry name" value="rpsS_bact"/>
    <property type="match status" value="1"/>
</dbReference>
<dbReference type="PANTHER" id="PTHR11880">
    <property type="entry name" value="RIBOSOMAL PROTEIN S19P FAMILY MEMBER"/>
    <property type="match status" value="1"/>
</dbReference>
<dbReference type="PANTHER" id="PTHR11880:SF8">
    <property type="entry name" value="SMALL RIBOSOMAL SUBUNIT PROTEIN US19M"/>
    <property type="match status" value="1"/>
</dbReference>
<dbReference type="Pfam" id="PF00203">
    <property type="entry name" value="Ribosomal_S19"/>
    <property type="match status" value="1"/>
</dbReference>
<dbReference type="PIRSF" id="PIRSF002144">
    <property type="entry name" value="Ribosomal_S19"/>
    <property type="match status" value="1"/>
</dbReference>
<dbReference type="PRINTS" id="PR00975">
    <property type="entry name" value="RIBOSOMALS19"/>
</dbReference>
<dbReference type="SUPFAM" id="SSF54570">
    <property type="entry name" value="Ribosomal protein S19"/>
    <property type="match status" value="1"/>
</dbReference>
<dbReference type="PROSITE" id="PS00323">
    <property type="entry name" value="RIBOSOMAL_S19"/>
    <property type="match status" value="1"/>
</dbReference>
<evidence type="ECO:0000255" key="1">
    <source>
        <dbReference type="HAMAP-Rule" id="MF_00531"/>
    </source>
</evidence>
<evidence type="ECO:0000305" key="2"/>
<organism>
    <name type="scientific">Helicobacter pylori (strain HPAG1)</name>
    <dbReference type="NCBI Taxonomy" id="357544"/>
    <lineage>
        <taxon>Bacteria</taxon>
        <taxon>Pseudomonadati</taxon>
        <taxon>Campylobacterota</taxon>
        <taxon>Epsilonproteobacteria</taxon>
        <taxon>Campylobacterales</taxon>
        <taxon>Helicobacteraceae</taxon>
        <taxon>Helicobacter</taxon>
    </lineage>
</organism>
<protein>
    <recommendedName>
        <fullName evidence="1">Small ribosomal subunit protein uS19</fullName>
    </recommendedName>
    <alternativeName>
        <fullName evidence="2">30S ribosomal protein S19</fullName>
    </alternativeName>
</protein>
<gene>
    <name evidence="1" type="primary">rpsS</name>
    <name type="ordered locus">HPAG1_1260</name>
</gene>
<proteinExistence type="inferred from homology"/>
<accession>Q1CRU5</accession>
<feature type="chain" id="PRO_0000265371" description="Small ribosomal subunit protein uS19">
    <location>
        <begin position="1"/>
        <end position="93"/>
    </location>
</feature>
<comment type="function">
    <text evidence="1">Protein S19 forms a complex with S13 that binds strongly to the 16S ribosomal RNA.</text>
</comment>
<comment type="similarity">
    <text evidence="1">Belongs to the universal ribosomal protein uS19 family.</text>
</comment>
<name>RS19_HELPH</name>